<feature type="chain" id="PRO_1000137660" description="Chaperone protein DnaJ">
    <location>
        <begin position="1"/>
        <end position="371"/>
    </location>
</feature>
<feature type="domain" description="J" evidence="1">
    <location>
        <begin position="5"/>
        <end position="69"/>
    </location>
</feature>
<feature type="repeat" description="CXXCXGXG motif">
    <location>
        <begin position="146"/>
        <end position="153"/>
    </location>
</feature>
<feature type="repeat" description="CXXCXGXG motif">
    <location>
        <begin position="163"/>
        <end position="170"/>
    </location>
</feature>
<feature type="repeat" description="CXXCXGXG motif">
    <location>
        <begin position="189"/>
        <end position="196"/>
    </location>
</feature>
<feature type="repeat" description="CXXCXGXG motif">
    <location>
        <begin position="203"/>
        <end position="210"/>
    </location>
</feature>
<feature type="zinc finger region" description="CR-type" evidence="1">
    <location>
        <begin position="133"/>
        <end position="215"/>
    </location>
</feature>
<feature type="binding site" evidence="1">
    <location>
        <position position="146"/>
    </location>
    <ligand>
        <name>Zn(2+)</name>
        <dbReference type="ChEBI" id="CHEBI:29105"/>
        <label>1</label>
    </ligand>
</feature>
<feature type="binding site" evidence="1">
    <location>
        <position position="149"/>
    </location>
    <ligand>
        <name>Zn(2+)</name>
        <dbReference type="ChEBI" id="CHEBI:29105"/>
        <label>1</label>
    </ligand>
</feature>
<feature type="binding site" evidence="1">
    <location>
        <position position="163"/>
    </location>
    <ligand>
        <name>Zn(2+)</name>
        <dbReference type="ChEBI" id="CHEBI:29105"/>
        <label>2</label>
    </ligand>
</feature>
<feature type="binding site" evidence="1">
    <location>
        <position position="166"/>
    </location>
    <ligand>
        <name>Zn(2+)</name>
        <dbReference type="ChEBI" id="CHEBI:29105"/>
        <label>2</label>
    </ligand>
</feature>
<feature type="binding site" evidence="1">
    <location>
        <position position="189"/>
    </location>
    <ligand>
        <name>Zn(2+)</name>
        <dbReference type="ChEBI" id="CHEBI:29105"/>
        <label>2</label>
    </ligand>
</feature>
<feature type="binding site" evidence="1">
    <location>
        <position position="192"/>
    </location>
    <ligand>
        <name>Zn(2+)</name>
        <dbReference type="ChEBI" id="CHEBI:29105"/>
        <label>2</label>
    </ligand>
</feature>
<feature type="binding site" evidence="1">
    <location>
        <position position="203"/>
    </location>
    <ligand>
        <name>Zn(2+)</name>
        <dbReference type="ChEBI" id="CHEBI:29105"/>
        <label>1</label>
    </ligand>
</feature>
<feature type="binding site" evidence="1">
    <location>
        <position position="206"/>
    </location>
    <ligand>
        <name>Zn(2+)</name>
        <dbReference type="ChEBI" id="CHEBI:29105"/>
        <label>1</label>
    </ligand>
</feature>
<sequence>MSKRDYYEVLGLSKGASKDEIKKAYRRLAKKYHPDVSKEENAIEKFKEVQEAYEVLSDDQKRAQYDQFGHAGANQGFGGFGGGGDFGGGFGFEDIFSSFFGGGGGRRRDPNAPRQGADLQYQVTLDFEEAIFGKELNVEIPVEDPCDTCKGSGAKPGTSKETCKHCSGSGQVSVEQNTPFGRIVNRQACGHCSGTGQIIKEKCTTCHGSGKVRKRKKINVKIPAGIDNGQQIRVSGKGEAGVNGGPAGDLYVVVHVRNHEFFEREGDHIICEMPLTFAQMALGDEVEVPTVHGKVKLKIPAGTQTGTEFRLKGKGAPNVRGYGQGDQYVVVRVVVPTKLTSQQKDLLREFAGQEEQDDSLFGKLKRAFKGE</sequence>
<reference key="1">
    <citation type="submission" date="2008-10" db="EMBL/GenBank/DDBJ databases">
        <title>Genome sequence of Bacillus cereus AH187.</title>
        <authorList>
            <person name="Dodson R.J."/>
            <person name="Durkin A.S."/>
            <person name="Rosovitz M.J."/>
            <person name="Rasko D.A."/>
            <person name="Kolsto A.B."/>
            <person name="Okstad O.A."/>
            <person name="Ravel J."/>
            <person name="Sutton G."/>
        </authorList>
    </citation>
    <scope>NUCLEOTIDE SEQUENCE [LARGE SCALE GENOMIC DNA]</scope>
    <source>
        <strain>AH187</strain>
    </source>
</reference>
<evidence type="ECO:0000255" key="1">
    <source>
        <dbReference type="HAMAP-Rule" id="MF_01152"/>
    </source>
</evidence>
<gene>
    <name evidence="1" type="primary">dnaJ</name>
    <name type="ordered locus">BCAH187_A4446</name>
</gene>
<protein>
    <recommendedName>
        <fullName evidence="1">Chaperone protein DnaJ</fullName>
    </recommendedName>
</protein>
<keyword id="KW-0143">Chaperone</keyword>
<keyword id="KW-0963">Cytoplasm</keyword>
<keyword id="KW-0235">DNA replication</keyword>
<keyword id="KW-0479">Metal-binding</keyword>
<keyword id="KW-0677">Repeat</keyword>
<keyword id="KW-0346">Stress response</keyword>
<keyword id="KW-0862">Zinc</keyword>
<keyword id="KW-0863">Zinc-finger</keyword>
<comment type="function">
    <text evidence="1">Participates actively in the response to hyperosmotic and heat shock by preventing the aggregation of stress-denatured proteins and by disaggregating proteins, also in an autonomous, DnaK-independent fashion. Unfolded proteins bind initially to DnaJ; upon interaction with the DnaJ-bound protein, DnaK hydrolyzes its bound ATP, resulting in the formation of a stable complex. GrpE releases ADP from DnaK; ATP binding to DnaK triggers the release of the substrate protein, thus completing the reaction cycle. Several rounds of ATP-dependent interactions between DnaJ, DnaK and GrpE are required for fully efficient folding. Also involved, together with DnaK and GrpE, in the DNA replication of plasmids through activation of initiation proteins.</text>
</comment>
<comment type="cofactor">
    <cofactor evidence="1">
        <name>Zn(2+)</name>
        <dbReference type="ChEBI" id="CHEBI:29105"/>
    </cofactor>
    <text evidence="1">Binds 2 Zn(2+) ions per monomer.</text>
</comment>
<comment type="subunit">
    <text evidence="1">Homodimer.</text>
</comment>
<comment type="subcellular location">
    <subcellularLocation>
        <location evidence="1">Cytoplasm</location>
    </subcellularLocation>
</comment>
<comment type="domain">
    <text evidence="1">The J domain is necessary and sufficient to stimulate DnaK ATPase activity. Zinc center 1 plays an important role in the autonomous, DnaK-independent chaperone activity of DnaJ. Zinc center 2 is essential for interaction with DnaK and for DnaJ activity.</text>
</comment>
<comment type="similarity">
    <text evidence="1">Belongs to the DnaJ family.</text>
</comment>
<accession>B7HPL2</accession>
<organism>
    <name type="scientific">Bacillus cereus (strain AH187)</name>
    <dbReference type="NCBI Taxonomy" id="405534"/>
    <lineage>
        <taxon>Bacteria</taxon>
        <taxon>Bacillati</taxon>
        <taxon>Bacillota</taxon>
        <taxon>Bacilli</taxon>
        <taxon>Bacillales</taxon>
        <taxon>Bacillaceae</taxon>
        <taxon>Bacillus</taxon>
        <taxon>Bacillus cereus group</taxon>
    </lineage>
</organism>
<name>DNAJ_BACC7</name>
<proteinExistence type="inferred from homology"/>
<dbReference type="EMBL" id="CP001177">
    <property type="protein sequence ID" value="ACJ79920.1"/>
    <property type="molecule type" value="Genomic_DNA"/>
</dbReference>
<dbReference type="SMR" id="B7HPL2"/>
<dbReference type="KEGG" id="bcr:BCAH187_A4446"/>
<dbReference type="HOGENOM" id="CLU_017633_0_7_9"/>
<dbReference type="Proteomes" id="UP000002214">
    <property type="component" value="Chromosome"/>
</dbReference>
<dbReference type="GO" id="GO:0005737">
    <property type="term" value="C:cytoplasm"/>
    <property type="evidence" value="ECO:0007669"/>
    <property type="project" value="UniProtKB-SubCell"/>
</dbReference>
<dbReference type="GO" id="GO:0005524">
    <property type="term" value="F:ATP binding"/>
    <property type="evidence" value="ECO:0007669"/>
    <property type="project" value="InterPro"/>
</dbReference>
<dbReference type="GO" id="GO:0031072">
    <property type="term" value="F:heat shock protein binding"/>
    <property type="evidence" value="ECO:0007669"/>
    <property type="project" value="InterPro"/>
</dbReference>
<dbReference type="GO" id="GO:0051082">
    <property type="term" value="F:unfolded protein binding"/>
    <property type="evidence" value="ECO:0007669"/>
    <property type="project" value="UniProtKB-UniRule"/>
</dbReference>
<dbReference type="GO" id="GO:0008270">
    <property type="term" value="F:zinc ion binding"/>
    <property type="evidence" value="ECO:0007669"/>
    <property type="project" value="UniProtKB-UniRule"/>
</dbReference>
<dbReference type="GO" id="GO:0051085">
    <property type="term" value="P:chaperone cofactor-dependent protein refolding"/>
    <property type="evidence" value="ECO:0007669"/>
    <property type="project" value="TreeGrafter"/>
</dbReference>
<dbReference type="GO" id="GO:0006260">
    <property type="term" value="P:DNA replication"/>
    <property type="evidence" value="ECO:0007669"/>
    <property type="project" value="UniProtKB-KW"/>
</dbReference>
<dbReference type="GO" id="GO:0042026">
    <property type="term" value="P:protein refolding"/>
    <property type="evidence" value="ECO:0007669"/>
    <property type="project" value="TreeGrafter"/>
</dbReference>
<dbReference type="GO" id="GO:0009408">
    <property type="term" value="P:response to heat"/>
    <property type="evidence" value="ECO:0007669"/>
    <property type="project" value="InterPro"/>
</dbReference>
<dbReference type="CDD" id="cd06257">
    <property type="entry name" value="DnaJ"/>
    <property type="match status" value="1"/>
</dbReference>
<dbReference type="CDD" id="cd10747">
    <property type="entry name" value="DnaJ_C"/>
    <property type="match status" value="1"/>
</dbReference>
<dbReference type="CDD" id="cd10719">
    <property type="entry name" value="DnaJ_zf"/>
    <property type="match status" value="1"/>
</dbReference>
<dbReference type="FunFam" id="1.10.287.110:FF:000031">
    <property type="entry name" value="Molecular chaperone DnaJ"/>
    <property type="match status" value="1"/>
</dbReference>
<dbReference type="FunFam" id="2.10.230.10:FF:000002">
    <property type="entry name" value="Molecular chaperone DnaJ"/>
    <property type="match status" value="1"/>
</dbReference>
<dbReference type="FunFam" id="2.60.260.20:FF:000004">
    <property type="entry name" value="Molecular chaperone DnaJ"/>
    <property type="match status" value="1"/>
</dbReference>
<dbReference type="FunFam" id="2.60.260.20:FF:000009">
    <property type="entry name" value="Putative Mitochondrial DnaJ chaperone"/>
    <property type="match status" value="1"/>
</dbReference>
<dbReference type="Gene3D" id="6.20.20.10">
    <property type="match status" value="2"/>
</dbReference>
<dbReference type="Gene3D" id="1.10.287.110">
    <property type="entry name" value="DnaJ domain"/>
    <property type="match status" value="1"/>
</dbReference>
<dbReference type="Gene3D" id="2.60.260.20">
    <property type="entry name" value="Urease metallochaperone UreE, N-terminal domain"/>
    <property type="match status" value="2"/>
</dbReference>
<dbReference type="HAMAP" id="MF_01152">
    <property type="entry name" value="DnaJ"/>
    <property type="match status" value="1"/>
</dbReference>
<dbReference type="InterPro" id="IPR012724">
    <property type="entry name" value="DnaJ"/>
</dbReference>
<dbReference type="InterPro" id="IPR002939">
    <property type="entry name" value="DnaJ_C"/>
</dbReference>
<dbReference type="InterPro" id="IPR001623">
    <property type="entry name" value="DnaJ_domain"/>
</dbReference>
<dbReference type="InterPro" id="IPR018253">
    <property type="entry name" value="DnaJ_domain_CS"/>
</dbReference>
<dbReference type="InterPro" id="IPR008971">
    <property type="entry name" value="HSP40/DnaJ_pept-bd"/>
</dbReference>
<dbReference type="InterPro" id="IPR001305">
    <property type="entry name" value="HSP_DnaJ_Cys-rich_dom"/>
</dbReference>
<dbReference type="InterPro" id="IPR036410">
    <property type="entry name" value="HSP_DnaJ_Cys-rich_dom_sf"/>
</dbReference>
<dbReference type="InterPro" id="IPR036869">
    <property type="entry name" value="J_dom_sf"/>
</dbReference>
<dbReference type="NCBIfam" id="TIGR02349">
    <property type="entry name" value="DnaJ_bact"/>
    <property type="match status" value="1"/>
</dbReference>
<dbReference type="NCBIfam" id="NF008035">
    <property type="entry name" value="PRK10767.1"/>
    <property type="match status" value="1"/>
</dbReference>
<dbReference type="NCBIfam" id="NF010873">
    <property type="entry name" value="PRK14280.1"/>
    <property type="match status" value="1"/>
</dbReference>
<dbReference type="PANTHER" id="PTHR43096:SF48">
    <property type="entry name" value="CHAPERONE PROTEIN DNAJ"/>
    <property type="match status" value="1"/>
</dbReference>
<dbReference type="PANTHER" id="PTHR43096">
    <property type="entry name" value="DNAJ HOMOLOG 1, MITOCHONDRIAL-RELATED"/>
    <property type="match status" value="1"/>
</dbReference>
<dbReference type="Pfam" id="PF00226">
    <property type="entry name" value="DnaJ"/>
    <property type="match status" value="1"/>
</dbReference>
<dbReference type="Pfam" id="PF01556">
    <property type="entry name" value="DnaJ_C"/>
    <property type="match status" value="1"/>
</dbReference>
<dbReference type="Pfam" id="PF00684">
    <property type="entry name" value="DnaJ_CXXCXGXG"/>
    <property type="match status" value="1"/>
</dbReference>
<dbReference type="PRINTS" id="PR00625">
    <property type="entry name" value="JDOMAIN"/>
</dbReference>
<dbReference type="SMART" id="SM00271">
    <property type="entry name" value="DnaJ"/>
    <property type="match status" value="1"/>
</dbReference>
<dbReference type="SUPFAM" id="SSF46565">
    <property type="entry name" value="Chaperone J-domain"/>
    <property type="match status" value="1"/>
</dbReference>
<dbReference type="SUPFAM" id="SSF57938">
    <property type="entry name" value="DnaJ/Hsp40 cysteine-rich domain"/>
    <property type="match status" value="1"/>
</dbReference>
<dbReference type="SUPFAM" id="SSF49493">
    <property type="entry name" value="HSP40/DnaJ peptide-binding domain"/>
    <property type="match status" value="2"/>
</dbReference>
<dbReference type="PROSITE" id="PS00636">
    <property type="entry name" value="DNAJ_1"/>
    <property type="match status" value="1"/>
</dbReference>
<dbReference type="PROSITE" id="PS50076">
    <property type="entry name" value="DNAJ_2"/>
    <property type="match status" value="1"/>
</dbReference>
<dbReference type="PROSITE" id="PS51188">
    <property type="entry name" value="ZF_CR"/>
    <property type="match status" value="1"/>
</dbReference>